<evidence type="ECO:0000255" key="1">
    <source>
        <dbReference type="HAMAP-Rule" id="MF_00104"/>
    </source>
</evidence>
<evidence type="ECO:0000256" key="2">
    <source>
        <dbReference type="SAM" id="MobiDB-lite"/>
    </source>
</evidence>
<keyword id="KW-0963">Cytoplasm</keyword>
<keyword id="KW-0255">Endonuclease</keyword>
<keyword id="KW-0378">Hydrolase</keyword>
<keyword id="KW-0460">Magnesium</keyword>
<keyword id="KW-0479">Metal-binding</keyword>
<keyword id="KW-0507">mRNA processing</keyword>
<keyword id="KW-0540">Nuclease</keyword>
<keyword id="KW-0694">RNA-binding</keyword>
<keyword id="KW-0698">rRNA processing</keyword>
<keyword id="KW-0699">rRNA-binding</keyword>
<keyword id="KW-0819">tRNA processing</keyword>
<name>RNC_BACFR</name>
<sequence>MLRNKIDKIRLLFRKDRESYSCFYRILGFYPRNIRLYEQALLHKSTAVRSEKGRPLNNERLEFLGDAILDAIVGDIVYQHFEGKREGFLTNTRSKIVQRETLNKLAVEIGLDKLIKYSTRSSSHNSYMYGNAFEAFIGAIYLDRGYECCKQFMERRIIEPYIDLDKLSRKEVNFKSKLIEWSQKNKMEVSFELIEQSLDKENNPVFQTEVRIEGILGGSGTGYSKKESQQNAAQMTLKKIKGDPEFMASVQEAKTQNNVPAEDTTPESEMSLTAENQQIDEIISTEEISV</sequence>
<feature type="chain" id="PRO_0000228496" description="Ribonuclease 3">
    <location>
        <begin position="1"/>
        <end position="290"/>
    </location>
</feature>
<feature type="domain" description="RNase III" evidence="1">
    <location>
        <begin position="20"/>
        <end position="145"/>
    </location>
</feature>
<feature type="domain" description="DRBM" evidence="1">
    <location>
        <begin position="173"/>
        <end position="242"/>
    </location>
</feature>
<feature type="region of interest" description="Disordered" evidence="2">
    <location>
        <begin position="254"/>
        <end position="290"/>
    </location>
</feature>
<feature type="compositionally biased region" description="Polar residues" evidence="2">
    <location>
        <begin position="267"/>
        <end position="279"/>
    </location>
</feature>
<feature type="active site" evidence="1">
    <location>
        <position position="66"/>
    </location>
</feature>
<feature type="active site" evidence="1">
    <location>
        <position position="134"/>
    </location>
</feature>
<feature type="binding site" evidence="1">
    <location>
        <position position="62"/>
    </location>
    <ligand>
        <name>Mg(2+)</name>
        <dbReference type="ChEBI" id="CHEBI:18420"/>
    </ligand>
</feature>
<feature type="binding site" evidence="1">
    <location>
        <position position="131"/>
    </location>
    <ligand>
        <name>Mg(2+)</name>
        <dbReference type="ChEBI" id="CHEBI:18420"/>
    </ligand>
</feature>
<feature type="binding site" evidence="1">
    <location>
        <position position="134"/>
    </location>
    <ligand>
        <name>Mg(2+)</name>
        <dbReference type="ChEBI" id="CHEBI:18420"/>
    </ligand>
</feature>
<organism>
    <name type="scientific">Bacteroides fragilis (strain YCH46)</name>
    <dbReference type="NCBI Taxonomy" id="295405"/>
    <lineage>
        <taxon>Bacteria</taxon>
        <taxon>Pseudomonadati</taxon>
        <taxon>Bacteroidota</taxon>
        <taxon>Bacteroidia</taxon>
        <taxon>Bacteroidales</taxon>
        <taxon>Bacteroidaceae</taxon>
        <taxon>Bacteroides</taxon>
    </lineage>
</organism>
<reference key="1">
    <citation type="journal article" date="2004" name="Proc. Natl. Acad. Sci. U.S.A.">
        <title>Genomic analysis of Bacteroides fragilis reveals extensive DNA inversions regulating cell surface adaptation.</title>
        <authorList>
            <person name="Kuwahara T."/>
            <person name="Yamashita A."/>
            <person name="Hirakawa H."/>
            <person name="Nakayama H."/>
            <person name="Toh H."/>
            <person name="Okada N."/>
            <person name="Kuhara S."/>
            <person name="Hattori M."/>
            <person name="Hayashi T."/>
            <person name="Ohnishi Y."/>
        </authorList>
    </citation>
    <scope>NUCLEOTIDE SEQUENCE [LARGE SCALE GENOMIC DNA]</scope>
    <source>
        <strain>YCH46</strain>
    </source>
</reference>
<accession>Q64ZV9</accession>
<comment type="function">
    <text evidence="1">Digests double-stranded RNA. Involved in the processing of primary rRNA transcript to yield the immediate precursors to the large and small rRNAs (23S and 16S). Processes some mRNAs, and tRNAs when they are encoded in the rRNA operon. Processes pre-crRNA and tracrRNA of type II CRISPR loci if present in the organism.</text>
</comment>
<comment type="catalytic activity">
    <reaction evidence="1">
        <text>Endonucleolytic cleavage to 5'-phosphomonoester.</text>
        <dbReference type="EC" id="3.1.26.3"/>
    </reaction>
</comment>
<comment type="cofactor">
    <cofactor evidence="1">
        <name>Mg(2+)</name>
        <dbReference type="ChEBI" id="CHEBI:18420"/>
    </cofactor>
</comment>
<comment type="subunit">
    <text evidence="1">Homodimer.</text>
</comment>
<comment type="subcellular location">
    <subcellularLocation>
        <location evidence="1">Cytoplasm</location>
    </subcellularLocation>
</comment>
<comment type="similarity">
    <text evidence="1">Belongs to the ribonuclease III family.</text>
</comment>
<proteinExistence type="inferred from homology"/>
<protein>
    <recommendedName>
        <fullName evidence="1">Ribonuclease 3</fullName>
        <ecNumber evidence="1">3.1.26.3</ecNumber>
    </recommendedName>
    <alternativeName>
        <fullName evidence="1">Ribonuclease III</fullName>
        <shortName evidence="1">RNase III</shortName>
    </alternativeName>
</protein>
<dbReference type="EC" id="3.1.26.3" evidence="1"/>
<dbReference type="EMBL" id="AP006841">
    <property type="protein sequence ID" value="BAD46967.1"/>
    <property type="molecule type" value="Genomic_DNA"/>
</dbReference>
<dbReference type="RefSeq" id="WP_009291361.1">
    <property type="nucleotide sequence ID" value="NC_006347.1"/>
</dbReference>
<dbReference type="RefSeq" id="YP_097501.1">
    <property type="nucleotide sequence ID" value="NC_006347.1"/>
</dbReference>
<dbReference type="SMR" id="Q64ZV9"/>
<dbReference type="STRING" id="295405.BF0218"/>
<dbReference type="KEGG" id="bfr:BF0218"/>
<dbReference type="PATRIC" id="fig|295405.11.peg.248"/>
<dbReference type="HOGENOM" id="CLU_000907_1_0_10"/>
<dbReference type="OrthoDB" id="9805026at2"/>
<dbReference type="Proteomes" id="UP000002197">
    <property type="component" value="Chromosome"/>
</dbReference>
<dbReference type="GO" id="GO:0005737">
    <property type="term" value="C:cytoplasm"/>
    <property type="evidence" value="ECO:0007669"/>
    <property type="project" value="UniProtKB-SubCell"/>
</dbReference>
<dbReference type="GO" id="GO:0003725">
    <property type="term" value="F:double-stranded RNA binding"/>
    <property type="evidence" value="ECO:0007669"/>
    <property type="project" value="TreeGrafter"/>
</dbReference>
<dbReference type="GO" id="GO:0046872">
    <property type="term" value="F:metal ion binding"/>
    <property type="evidence" value="ECO:0007669"/>
    <property type="project" value="UniProtKB-KW"/>
</dbReference>
<dbReference type="GO" id="GO:0004525">
    <property type="term" value="F:ribonuclease III activity"/>
    <property type="evidence" value="ECO:0007669"/>
    <property type="project" value="UniProtKB-UniRule"/>
</dbReference>
<dbReference type="GO" id="GO:0019843">
    <property type="term" value="F:rRNA binding"/>
    <property type="evidence" value="ECO:0007669"/>
    <property type="project" value="UniProtKB-KW"/>
</dbReference>
<dbReference type="GO" id="GO:0006397">
    <property type="term" value="P:mRNA processing"/>
    <property type="evidence" value="ECO:0007669"/>
    <property type="project" value="UniProtKB-UniRule"/>
</dbReference>
<dbReference type="GO" id="GO:0010468">
    <property type="term" value="P:regulation of gene expression"/>
    <property type="evidence" value="ECO:0007669"/>
    <property type="project" value="TreeGrafter"/>
</dbReference>
<dbReference type="GO" id="GO:0006364">
    <property type="term" value="P:rRNA processing"/>
    <property type="evidence" value="ECO:0007669"/>
    <property type="project" value="UniProtKB-UniRule"/>
</dbReference>
<dbReference type="GO" id="GO:0008033">
    <property type="term" value="P:tRNA processing"/>
    <property type="evidence" value="ECO:0007669"/>
    <property type="project" value="UniProtKB-KW"/>
</dbReference>
<dbReference type="CDD" id="cd10845">
    <property type="entry name" value="DSRM_RNAse_III_family"/>
    <property type="match status" value="1"/>
</dbReference>
<dbReference type="CDD" id="cd00593">
    <property type="entry name" value="RIBOc"/>
    <property type="match status" value="1"/>
</dbReference>
<dbReference type="FunFam" id="1.10.1520.10:FF:000012">
    <property type="entry name" value="Ribonuclease 3"/>
    <property type="match status" value="1"/>
</dbReference>
<dbReference type="Gene3D" id="3.30.160.20">
    <property type="match status" value="1"/>
</dbReference>
<dbReference type="Gene3D" id="1.10.1520.10">
    <property type="entry name" value="Ribonuclease III domain"/>
    <property type="match status" value="1"/>
</dbReference>
<dbReference type="HAMAP" id="MF_00104">
    <property type="entry name" value="RNase_III"/>
    <property type="match status" value="1"/>
</dbReference>
<dbReference type="InterPro" id="IPR014720">
    <property type="entry name" value="dsRBD_dom"/>
</dbReference>
<dbReference type="InterPro" id="IPR011907">
    <property type="entry name" value="RNase_III"/>
</dbReference>
<dbReference type="InterPro" id="IPR000999">
    <property type="entry name" value="RNase_III_dom"/>
</dbReference>
<dbReference type="InterPro" id="IPR036389">
    <property type="entry name" value="RNase_III_sf"/>
</dbReference>
<dbReference type="NCBIfam" id="TIGR02191">
    <property type="entry name" value="RNaseIII"/>
    <property type="match status" value="1"/>
</dbReference>
<dbReference type="PANTHER" id="PTHR11207:SF0">
    <property type="entry name" value="RIBONUCLEASE 3"/>
    <property type="match status" value="1"/>
</dbReference>
<dbReference type="PANTHER" id="PTHR11207">
    <property type="entry name" value="RIBONUCLEASE III"/>
    <property type="match status" value="1"/>
</dbReference>
<dbReference type="Pfam" id="PF00035">
    <property type="entry name" value="dsrm"/>
    <property type="match status" value="1"/>
</dbReference>
<dbReference type="Pfam" id="PF14622">
    <property type="entry name" value="Ribonucleas_3_3"/>
    <property type="match status" value="1"/>
</dbReference>
<dbReference type="SMART" id="SM00358">
    <property type="entry name" value="DSRM"/>
    <property type="match status" value="1"/>
</dbReference>
<dbReference type="SMART" id="SM00535">
    <property type="entry name" value="RIBOc"/>
    <property type="match status" value="1"/>
</dbReference>
<dbReference type="SUPFAM" id="SSF54768">
    <property type="entry name" value="dsRNA-binding domain-like"/>
    <property type="match status" value="1"/>
</dbReference>
<dbReference type="SUPFAM" id="SSF69065">
    <property type="entry name" value="RNase III domain-like"/>
    <property type="match status" value="1"/>
</dbReference>
<dbReference type="PROSITE" id="PS50137">
    <property type="entry name" value="DS_RBD"/>
    <property type="match status" value="1"/>
</dbReference>
<dbReference type="PROSITE" id="PS00517">
    <property type="entry name" value="RNASE_3_1"/>
    <property type="match status" value="1"/>
</dbReference>
<dbReference type="PROSITE" id="PS50142">
    <property type="entry name" value="RNASE_3_2"/>
    <property type="match status" value="1"/>
</dbReference>
<gene>
    <name evidence="1" type="primary">rnc</name>
    <name type="ordered locus">BF0218</name>
</gene>